<evidence type="ECO:0000255" key="1">
    <source>
        <dbReference type="HAMAP-Rule" id="MF_00127"/>
    </source>
</evidence>
<dbReference type="EC" id="6.1.1.21" evidence="1"/>
<dbReference type="EMBL" id="CR936503">
    <property type="protein sequence ID" value="CAI55164.1"/>
    <property type="molecule type" value="Genomic_DNA"/>
</dbReference>
<dbReference type="RefSeq" id="WP_011374566.1">
    <property type="nucleotide sequence ID" value="NC_007576.1"/>
</dbReference>
<dbReference type="SMR" id="Q38XB7"/>
<dbReference type="STRING" id="314315.LCA_0863"/>
<dbReference type="KEGG" id="lsa:LCA_0863"/>
<dbReference type="eggNOG" id="COG0124">
    <property type="taxonomic scope" value="Bacteria"/>
</dbReference>
<dbReference type="HOGENOM" id="CLU_025113_1_1_9"/>
<dbReference type="OrthoDB" id="9800814at2"/>
<dbReference type="Proteomes" id="UP000002707">
    <property type="component" value="Chromosome"/>
</dbReference>
<dbReference type="GO" id="GO:0005737">
    <property type="term" value="C:cytoplasm"/>
    <property type="evidence" value="ECO:0007669"/>
    <property type="project" value="UniProtKB-SubCell"/>
</dbReference>
<dbReference type="GO" id="GO:0005524">
    <property type="term" value="F:ATP binding"/>
    <property type="evidence" value="ECO:0007669"/>
    <property type="project" value="UniProtKB-UniRule"/>
</dbReference>
<dbReference type="GO" id="GO:0140096">
    <property type="term" value="F:catalytic activity, acting on a protein"/>
    <property type="evidence" value="ECO:0007669"/>
    <property type="project" value="UniProtKB-ARBA"/>
</dbReference>
<dbReference type="GO" id="GO:0004821">
    <property type="term" value="F:histidine-tRNA ligase activity"/>
    <property type="evidence" value="ECO:0007669"/>
    <property type="project" value="UniProtKB-UniRule"/>
</dbReference>
<dbReference type="GO" id="GO:0016740">
    <property type="term" value="F:transferase activity"/>
    <property type="evidence" value="ECO:0007669"/>
    <property type="project" value="UniProtKB-ARBA"/>
</dbReference>
<dbReference type="GO" id="GO:0006427">
    <property type="term" value="P:histidyl-tRNA aminoacylation"/>
    <property type="evidence" value="ECO:0007669"/>
    <property type="project" value="UniProtKB-UniRule"/>
</dbReference>
<dbReference type="CDD" id="cd00773">
    <property type="entry name" value="HisRS-like_core"/>
    <property type="match status" value="1"/>
</dbReference>
<dbReference type="CDD" id="cd00859">
    <property type="entry name" value="HisRS_anticodon"/>
    <property type="match status" value="1"/>
</dbReference>
<dbReference type="FunFam" id="3.30.930.10:FF:000005">
    <property type="entry name" value="Histidine--tRNA ligase"/>
    <property type="match status" value="1"/>
</dbReference>
<dbReference type="Gene3D" id="3.40.50.800">
    <property type="entry name" value="Anticodon-binding domain"/>
    <property type="match status" value="1"/>
</dbReference>
<dbReference type="Gene3D" id="3.30.930.10">
    <property type="entry name" value="Bira Bifunctional Protein, Domain 2"/>
    <property type="match status" value="1"/>
</dbReference>
<dbReference type="HAMAP" id="MF_00127">
    <property type="entry name" value="His_tRNA_synth"/>
    <property type="match status" value="1"/>
</dbReference>
<dbReference type="InterPro" id="IPR006195">
    <property type="entry name" value="aa-tRNA-synth_II"/>
</dbReference>
<dbReference type="InterPro" id="IPR045864">
    <property type="entry name" value="aa-tRNA-synth_II/BPL/LPL"/>
</dbReference>
<dbReference type="InterPro" id="IPR004154">
    <property type="entry name" value="Anticodon-bd"/>
</dbReference>
<dbReference type="InterPro" id="IPR036621">
    <property type="entry name" value="Anticodon-bd_dom_sf"/>
</dbReference>
<dbReference type="InterPro" id="IPR015807">
    <property type="entry name" value="His-tRNA-ligase"/>
</dbReference>
<dbReference type="InterPro" id="IPR041715">
    <property type="entry name" value="HisRS-like_core"/>
</dbReference>
<dbReference type="InterPro" id="IPR004516">
    <property type="entry name" value="HisRS/HisZ"/>
</dbReference>
<dbReference type="InterPro" id="IPR033656">
    <property type="entry name" value="HisRS_anticodon"/>
</dbReference>
<dbReference type="NCBIfam" id="TIGR00442">
    <property type="entry name" value="hisS"/>
    <property type="match status" value="1"/>
</dbReference>
<dbReference type="PANTHER" id="PTHR43707:SF1">
    <property type="entry name" value="HISTIDINE--TRNA LIGASE, MITOCHONDRIAL-RELATED"/>
    <property type="match status" value="1"/>
</dbReference>
<dbReference type="PANTHER" id="PTHR43707">
    <property type="entry name" value="HISTIDYL-TRNA SYNTHETASE"/>
    <property type="match status" value="1"/>
</dbReference>
<dbReference type="Pfam" id="PF03129">
    <property type="entry name" value="HGTP_anticodon"/>
    <property type="match status" value="1"/>
</dbReference>
<dbReference type="Pfam" id="PF13393">
    <property type="entry name" value="tRNA-synt_His"/>
    <property type="match status" value="1"/>
</dbReference>
<dbReference type="PIRSF" id="PIRSF001549">
    <property type="entry name" value="His-tRNA_synth"/>
    <property type="match status" value="1"/>
</dbReference>
<dbReference type="SUPFAM" id="SSF52954">
    <property type="entry name" value="Class II aaRS ABD-related"/>
    <property type="match status" value="1"/>
</dbReference>
<dbReference type="SUPFAM" id="SSF55681">
    <property type="entry name" value="Class II aaRS and biotin synthetases"/>
    <property type="match status" value="1"/>
</dbReference>
<dbReference type="PROSITE" id="PS50862">
    <property type="entry name" value="AA_TRNA_LIGASE_II"/>
    <property type="match status" value="1"/>
</dbReference>
<sequence>MGYQKPKGTADILPGESDQWQLVEKTARDVFARYQFKEIRTPLFESYDVFSRSSGDTSDIVSKEMYDFMDKGDRHIALRPEGTAGVVRAFVENKLYGPEHQKPYKVYYMGPMFRYERPQSGRQRQFHQIGVESFGSESPAVDVEVISMAMRLLREFKITDLKLAINTLGDAASRAAYHEALVNYLEPHFEELSDDSKVRLHKNPLRVLDSKDAKDQEIVKDAPVILDYLTDEAKVHFNTVKTLLESLNIPYEVDTEMVRGLDYYNHTIFEIMTSNKVLGRGYTTVLAGGRYNGLVEQLGGPDMPGVGFGLGVERLLLLMNAQNSDLVAAPVLDAYVVGIGAETSATTLHLVESLREAGLTADRDYLDRKPKAQFKTANKLNAQFVVTIGESELADKTAHVKDMTSGVEITVPLTTLEADFAAVKNELKAQEENE</sequence>
<keyword id="KW-0030">Aminoacyl-tRNA synthetase</keyword>
<keyword id="KW-0067">ATP-binding</keyword>
<keyword id="KW-0963">Cytoplasm</keyword>
<keyword id="KW-0436">Ligase</keyword>
<keyword id="KW-0547">Nucleotide-binding</keyword>
<keyword id="KW-0648">Protein biosynthesis</keyword>
<keyword id="KW-1185">Reference proteome</keyword>
<accession>Q38XB7</accession>
<gene>
    <name evidence="1" type="primary">hisS</name>
    <name type="ordered locus">LCA_0863</name>
</gene>
<name>SYH_LATSS</name>
<reference key="1">
    <citation type="journal article" date="2005" name="Nat. Biotechnol.">
        <title>The complete genome sequence of the meat-borne lactic acid bacterium Lactobacillus sakei 23K.</title>
        <authorList>
            <person name="Chaillou S."/>
            <person name="Champomier-Verges M.-C."/>
            <person name="Cornet M."/>
            <person name="Crutz-Le Coq A.-M."/>
            <person name="Dudez A.-M."/>
            <person name="Martin V."/>
            <person name="Beaufils S."/>
            <person name="Darbon-Rongere E."/>
            <person name="Bossy R."/>
            <person name="Loux V."/>
            <person name="Zagorec M."/>
        </authorList>
    </citation>
    <scope>NUCLEOTIDE SEQUENCE [LARGE SCALE GENOMIC DNA]</scope>
    <source>
        <strain>23K</strain>
    </source>
</reference>
<comment type="catalytic activity">
    <reaction evidence="1">
        <text>tRNA(His) + L-histidine + ATP = L-histidyl-tRNA(His) + AMP + diphosphate + H(+)</text>
        <dbReference type="Rhea" id="RHEA:17313"/>
        <dbReference type="Rhea" id="RHEA-COMP:9665"/>
        <dbReference type="Rhea" id="RHEA-COMP:9689"/>
        <dbReference type="ChEBI" id="CHEBI:15378"/>
        <dbReference type="ChEBI" id="CHEBI:30616"/>
        <dbReference type="ChEBI" id="CHEBI:33019"/>
        <dbReference type="ChEBI" id="CHEBI:57595"/>
        <dbReference type="ChEBI" id="CHEBI:78442"/>
        <dbReference type="ChEBI" id="CHEBI:78527"/>
        <dbReference type="ChEBI" id="CHEBI:456215"/>
        <dbReference type="EC" id="6.1.1.21"/>
    </reaction>
</comment>
<comment type="subunit">
    <text evidence="1">Homodimer.</text>
</comment>
<comment type="subcellular location">
    <subcellularLocation>
        <location evidence="1">Cytoplasm</location>
    </subcellularLocation>
</comment>
<comment type="similarity">
    <text evidence="1">Belongs to the class-II aminoacyl-tRNA synthetase family.</text>
</comment>
<organism>
    <name type="scientific">Latilactobacillus sakei subsp. sakei (strain 23K)</name>
    <name type="common">Lactobacillus sakei subsp. sakei</name>
    <dbReference type="NCBI Taxonomy" id="314315"/>
    <lineage>
        <taxon>Bacteria</taxon>
        <taxon>Bacillati</taxon>
        <taxon>Bacillota</taxon>
        <taxon>Bacilli</taxon>
        <taxon>Lactobacillales</taxon>
        <taxon>Lactobacillaceae</taxon>
        <taxon>Latilactobacillus</taxon>
    </lineage>
</organism>
<protein>
    <recommendedName>
        <fullName evidence="1">Histidine--tRNA ligase</fullName>
        <ecNumber evidence="1">6.1.1.21</ecNumber>
    </recommendedName>
    <alternativeName>
        <fullName evidence="1">Histidyl-tRNA synthetase</fullName>
        <shortName evidence="1">HisRS</shortName>
    </alternativeName>
</protein>
<feature type="chain" id="PRO_1000016383" description="Histidine--tRNA ligase">
    <location>
        <begin position="1"/>
        <end position="434"/>
    </location>
</feature>
<proteinExistence type="inferred from homology"/>